<keyword id="KW-1003">Cell membrane</keyword>
<keyword id="KW-0449">Lipoprotein</keyword>
<keyword id="KW-0472">Membrane</keyword>
<keyword id="KW-0564">Palmitate</keyword>
<keyword id="KW-1185">Reference proteome</keyword>
<keyword id="KW-0732">Signal</keyword>
<gene>
    <name evidence="8" type="primary">lpqS</name>
    <name evidence="8" type="ordered locus">Rv0847</name>
    <name evidence="7" type="ordered locus">RVBD_0847</name>
    <name evidence="9" type="ORF">P425_00887</name>
</gene>
<organism>
    <name type="scientific">Mycobacterium tuberculosis (strain ATCC 25618 / H37Rv)</name>
    <dbReference type="NCBI Taxonomy" id="83332"/>
    <lineage>
        <taxon>Bacteria</taxon>
        <taxon>Bacillati</taxon>
        <taxon>Actinomycetota</taxon>
        <taxon>Actinomycetes</taxon>
        <taxon>Mycobacteriales</taxon>
        <taxon>Mycobacteriaceae</taxon>
        <taxon>Mycobacterium</taxon>
        <taxon>Mycobacterium tuberculosis complex</taxon>
    </lineage>
</organism>
<comment type="function">
    <text evidence="3">May play an essential role in M.tuberculosis replication and survival inside the host cell.</text>
</comment>
<comment type="subcellular location">
    <subcellularLocation>
        <location evidence="1">Cell membrane</location>
        <topology evidence="1">Lipid-anchor</topology>
    </subcellularLocation>
</comment>
<comment type="induction">
    <text evidence="2">Repressed by RicR. Induced by copper.</text>
</comment>
<comment type="disruption phenotype">
    <text evidence="3 4 5">Deletion mutant shows reduced growth in Sauton's minimal media and is highly sensitive to SDS and copper when grown on solid media (PubMed:23562345). Reduced growth in acidic media (pH 5.5) and under hypoxic conditions, with decreased survival in hypoxia (PubMed:26768127). In vitro, the mutant is attenuated for growth in PMA-activated THP-1 (human) cells (PubMed:23562345). Mutant is extremely resistant to copper and shows increased growth in vivo (PubMed:24549843). In vivo infected guinea pigs exhibited a considerably attenuated infection, and a few animals cleared the infection (PubMed:26768127).</text>
</comment>
<protein>
    <recommendedName>
        <fullName evidence="6">Lipoprotein LpqS</fullName>
    </recommendedName>
</protein>
<sequence>MVWMRSAIVAVALGVTVAAVAAACWLPQLHRHVAHPNHPLTTSVGSEFVINTDHGHLVDNSMPPCPERLATAVLPRSATPVLLPDVVAAAPGMTAALTDPVAPAARGPPAAQGSVRTGQDLLTRFCLARR</sequence>
<feature type="signal peptide" evidence="1">
    <location>
        <begin position="1"/>
        <end position="23"/>
    </location>
</feature>
<feature type="chain" id="PRO_0000433100" description="Lipoprotein LpqS">
    <location>
        <begin position="24"/>
        <end position="130"/>
    </location>
</feature>
<feature type="lipid moiety-binding region" description="N-palmitoyl cysteine" evidence="1">
    <location>
        <position position="24"/>
    </location>
</feature>
<feature type="lipid moiety-binding region" description="S-diacylglycerol cysteine" evidence="1">
    <location>
        <position position="24"/>
    </location>
</feature>
<accession>O53859</accession>
<accession>I6Y4Y9</accession>
<evidence type="ECO:0000255" key="1">
    <source>
        <dbReference type="PROSITE-ProRule" id="PRU00303"/>
    </source>
</evidence>
<evidence type="ECO:0000269" key="2">
    <source>
    </source>
</evidence>
<evidence type="ECO:0000269" key="3">
    <source>
    </source>
</evidence>
<evidence type="ECO:0000269" key="4">
    <source>
    </source>
</evidence>
<evidence type="ECO:0000269" key="5">
    <source>
    </source>
</evidence>
<evidence type="ECO:0000305" key="6"/>
<evidence type="ECO:0000312" key="7">
    <source>
        <dbReference type="EMBL" id="AFN48727.1"/>
    </source>
</evidence>
<evidence type="ECO:0000312" key="8">
    <source>
        <dbReference type="EMBL" id="CCP43595.1"/>
    </source>
</evidence>
<evidence type="ECO:0000312" key="9">
    <source>
        <dbReference type="EMBL" id="KBJ39046.1"/>
    </source>
</evidence>
<proteinExistence type="evidence at transcript level"/>
<dbReference type="EMBL" id="AL123456">
    <property type="protein sequence ID" value="CCP43595.1"/>
    <property type="molecule type" value="Genomic_DNA"/>
</dbReference>
<dbReference type="EMBL" id="CP003248">
    <property type="protein sequence ID" value="AFN48727.1"/>
    <property type="molecule type" value="Genomic_DNA"/>
</dbReference>
<dbReference type="EMBL" id="JLDD01000008">
    <property type="protein sequence ID" value="KBJ39046.1"/>
    <property type="molecule type" value="Genomic_DNA"/>
</dbReference>
<dbReference type="RefSeq" id="NP_215362.1">
    <property type="nucleotide sequence ID" value="NC_000962.3"/>
</dbReference>
<dbReference type="RefSeq" id="WP_003901025.1">
    <property type="nucleotide sequence ID" value="NZ_NVQJ01000040.1"/>
</dbReference>
<dbReference type="STRING" id="83332.Rv0847"/>
<dbReference type="PaxDb" id="83332-Rv0847"/>
<dbReference type="DNASU" id="885051"/>
<dbReference type="GeneID" id="45424813"/>
<dbReference type="GeneID" id="885051"/>
<dbReference type="KEGG" id="mtu:Rv0847"/>
<dbReference type="KEGG" id="mtv:RVBD_0847"/>
<dbReference type="PATRIC" id="fig|83332.111.peg.939"/>
<dbReference type="TubercuList" id="Rv0847"/>
<dbReference type="eggNOG" id="ENOG5032A5H">
    <property type="taxonomic scope" value="Bacteria"/>
</dbReference>
<dbReference type="HOGENOM" id="CLU_127068_1_0_11"/>
<dbReference type="InParanoid" id="O53859"/>
<dbReference type="OrthoDB" id="4625631at2"/>
<dbReference type="Proteomes" id="UP000001584">
    <property type="component" value="Chromosome"/>
</dbReference>
<dbReference type="GO" id="GO:0005886">
    <property type="term" value="C:plasma membrane"/>
    <property type="evidence" value="ECO:0007669"/>
    <property type="project" value="UniProtKB-SubCell"/>
</dbReference>
<dbReference type="GO" id="GO:0046688">
    <property type="term" value="P:response to copper ion"/>
    <property type="evidence" value="ECO:0000314"/>
    <property type="project" value="MTBBASE"/>
</dbReference>
<dbReference type="PROSITE" id="PS51257">
    <property type="entry name" value="PROKAR_LIPOPROTEIN"/>
    <property type="match status" value="1"/>
</dbReference>
<reference key="1">
    <citation type="journal article" date="1998" name="Nature">
        <title>Deciphering the biology of Mycobacterium tuberculosis from the complete genome sequence.</title>
        <authorList>
            <person name="Cole S.T."/>
            <person name="Brosch R."/>
            <person name="Parkhill J."/>
            <person name="Garnier T."/>
            <person name="Churcher C.M."/>
            <person name="Harris D.E."/>
            <person name="Gordon S.V."/>
            <person name="Eiglmeier K."/>
            <person name="Gas S."/>
            <person name="Barry C.E. III"/>
            <person name="Tekaia F."/>
            <person name="Badcock K."/>
            <person name="Basham D."/>
            <person name="Brown D."/>
            <person name="Chillingworth T."/>
            <person name="Connor R."/>
            <person name="Davies R.M."/>
            <person name="Devlin K."/>
            <person name="Feltwell T."/>
            <person name="Gentles S."/>
            <person name="Hamlin N."/>
            <person name="Holroyd S."/>
            <person name="Hornsby T."/>
            <person name="Jagels K."/>
            <person name="Krogh A."/>
            <person name="McLean J."/>
            <person name="Moule S."/>
            <person name="Murphy L.D."/>
            <person name="Oliver S."/>
            <person name="Osborne J."/>
            <person name="Quail M.A."/>
            <person name="Rajandream M.A."/>
            <person name="Rogers J."/>
            <person name="Rutter S."/>
            <person name="Seeger K."/>
            <person name="Skelton S."/>
            <person name="Squares S."/>
            <person name="Squares R."/>
            <person name="Sulston J.E."/>
            <person name="Taylor K."/>
            <person name="Whitehead S."/>
            <person name="Barrell B.G."/>
        </authorList>
    </citation>
    <scope>NUCLEOTIDE SEQUENCE [LARGE SCALE GENOMIC DNA]</scope>
    <source>
        <strain>ATCC 25618 / H37Rv</strain>
    </source>
</reference>
<reference key="2">
    <citation type="submission" date="2013-11" db="EMBL/GenBank/DDBJ databases">
        <title>The genome sequence of Mycobacterium tuberculosis H37Rv.</title>
        <authorList>
            <consortium name="The Broad Institute Genome Sequencing Platform"/>
            <person name="Galagan J."/>
            <person name="Kreiswirth B."/>
            <person name="Dobos K."/>
            <person name="Fortune S."/>
            <person name="Fitzgerald M."/>
            <person name="Young S.K."/>
            <person name="Zeng Q."/>
            <person name="Gargeya S."/>
            <person name="Abouelleil A."/>
            <person name="Alvarado L."/>
            <person name="Berlin A.M."/>
            <person name="Chapman S.B."/>
            <person name="Gainer-Dewar J."/>
            <person name="Goldberg J."/>
            <person name="Gnerre S."/>
            <person name="Griggs A."/>
            <person name="Gujja S."/>
            <person name="Hansen M."/>
            <person name="Howarth C."/>
            <person name="Imamovic A."/>
            <person name="Larimer J."/>
            <person name="McCowan C."/>
            <person name="Murphy C."/>
            <person name="Pearson M."/>
            <person name="Poon T."/>
            <person name="Priest M."/>
            <person name="Roberts A."/>
            <person name="Saif S."/>
            <person name="Shea T."/>
            <person name="Sykes S."/>
            <person name="Wortman J."/>
            <person name="Nusbaum C."/>
            <person name="Birren B."/>
        </authorList>
    </citation>
    <scope>NUCLEOTIDE SEQUENCE [LARGE SCALE GENOMIC DNA]</scope>
    <source>
        <strain>ATCC 25618 / H37Rv</strain>
    </source>
</reference>
<reference key="3">
    <citation type="submission" date="2014-04" db="EMBL/GenBank/DDBJ databases">
        <title>The genome sequence of Mycobacterium tuberculosis H37Rv.</title>
        <authorList>
            <consortium name="The Broad Institute Genomics Platform"/>
            <consortium name="The Broad Institute Genome Sequencing Center for Infectious Disease"/>
            <person name="Earl A.M."/>
            <person name="Kreiswirth B."/>
            <person name="Gomez J."/>
            <person name="Victor T."/>
            <person name="Desjardins C."/>
            <person name="Abeel T."/>
            <person name="Young S."/>
            <person name="Zeng Q."/>
            <person name="Gargeya S."/>
            <person name="Abouelleil A."/>
            <person name="Alvarado L."/>
            <person name="Chapman S.B."/>
            <person name="Gainer-Dewar J."/>
            <person name="Goldberg J."/>
            <person name="Griggs A."/>
            <person name="Gujja S."/>
            <person name="Hansen M."/>
            <person name="Howarth C."/>
            <person name="Imamovic A."/>
            <person name="Larimer J."/>
            <person name="Murphy C."/>
            <person name="Naylor J."/>
            <person name="Pearson M."/>
            <person name="Poon T.W."/>
            <person name="Priest M."/>
            <person name="Roberts A."/>
            <person name="Saif S."/>
            <person name="Shea T."/>
            <person name="Sykes S."/>
            <person name="Wortman J."/>
            <person name="Nusbaum C."/>
            <person name="Birren B."/>
        </authorList>
    </citation>
    <scope>NUCLEOTIDE SEQUENCE [LARGE SCALE GENOMIC DNA]</scope>
    <source>
        <strain>ATCC 25618 / H37Rv</strain>
    </source>
</reference>
<reference key="4">
    <citation type="journal article" date="2011" name="Mol. Microbiol.">
        <title>A novel copper-responsive regulon in Mycobacterium tuberculosis.</title>
        <authorList>
            <person name="Festa R.A."/>
            <person name="Jones M.B."/>
            <person name="Butler-Wu S."/>
            <person name="Sinsimer D."/>
            <person name="Gerads R."/>
            <person name="Bishai W.R."/>
            <person name="Peterson S.N."/>
            <person name="Darwin K.H."/>
        </authorList>
    </citation>
    <scope>INDUCTION</scope>
    <source>
        <strain>ATCC 25618 / H37Rv</strain>
    </source>
</reference>
<reference key="5">
    <citation type="journal article" date="2013" name="Microbiol. Res.">
        <title>The lpqS knockout mutant of Mycobacterium tuberculosis is attenuated in macrophages.</title>
        <authorList>
            <person name="Sakthi S."/>
            <person name="Narayanan S."/>
        </authorList>
    </citation>
    <scope>FUNCTION</scope>
    <scope>DISRUPTION PHENOTYPE</scope>
    <source>
        <strain>H37Rv</strain>
    </source>
</reference>
<reference key="6">
    <citation type="journal article" date="2014" name="MBio">
        <title>The copper-responsive RicR regulon contributes to Mycobacterium tuberculosis virulence.</title>
        <authorList>
            <person name="Shi X."/>
            <person name="Festa R.A."/>
            <person name="Ioerger T.R."/>
            <person name="Butler-Wu S."/>
            <person name="Sacchettini J.C."/>
            <person name="Darwin K.H."/>
            <person name="Samanovic M.I."/>
        </authorList>
    </citation>
    <scope>DISRUPTION PHENOTYPE</scope>
    <source>
        <strain>ATCC 25618 / H37Rv</strain>
    </source>
</reference>
<reference key="7">
    <citation type="journal article" date="2016" name="Vaccine">
        <title>Lipoprotein LpqS deficient M. tuberculosis mutant is attenuated for virulence in vivo and shows protective efficacy better than BCG in guinea pigs.</title>
        <authorList>
            <person name="Sakthi S."/>
            <person name="Palaniyandi K."/>
            <person name="Gupta U.D."/>
            <person name="Gupta P."/>
            <person name="Narayanan S."/>
        </authorList>
    </citation>
    <scope>DISRUPTION PHENOTYPE</scope>
    <source>
        <strain>H37Rv</strain>
    </source>
</reference>
<name>LPQS_MYCTU</name>